<sequence length="191" mass="20908">MIRISDAAQAHFAKLLANQEEGTQIRVFVINPGAPNAECGVSYCPPDAVEATDTALKFDLLTAYVDELSAPYLEDAEIDFVTDQLGSQLTLKAPNAKMRKVADDAPLMERVEYALQSQINPQLAGHGGRVSLMEITDEGYAILQFGGGCNGCSMVDVTLKEGIEKQLLNEFPELKGVRDLTEHQRGEHSYY</sequence>
<accession>Q5PLY6</accession>
<reference key="1">
    <citation type="journal article" date="2004" name="Nat. Genet.">
        <title>Comparison of genome degradation in Paratyphi A and Typhi, human-restricted serovars of Salmonella enterica that cause typhoid.</title>
        <authorList>
            <person name="McClelland M."/>
            <person name="Sanderson K.E."/>
            <person name="Clifton S.W."/>
            <person name="Latreille P."/>
            <person name="Porwollik S."/>
            <person name="Sabo A."/>
            <person name="Meyer R."/>
            <person name="Bieri T."/>
            <person name="Ozersky P."/>
            <person name="McLellan M."/>
            <person name="Harkins C.R."/>
            <person name="Wang C."/>
            <person name="Nguyen C."/>
            <person name="Berghoff A."/>
            <person name="Elliott G."/>
            <person name="Kohlberg S."/>
            <person name="Strong C."/>
            <person name="Du F."/>
            <person name="Carter J."/>
            <person name="Kremizki C."/>
            <person name="Layman D."/>
            <person name="Leonard S."/>
            <person name="Sun H."/>
            <person name="Fulton L."/>
            <person name="Nash W."/>
            <person name="Miner T."/>
            <person name="Minx P."/>
            <person name="Delehaunty K."/>
            <person name="Fronick C."/>
            <person name="Magrini V."/>
            <person name="Nhan M."/>
            <person name="Warren W."/>
            <person name="Florea L."/>
            <person name="Spieth J."/>
            <person name="Wilson R.K."/>
        </authorList>
    </citation>
    <scope>NUCLEOTIDE SEQUENCE [LARGE SCALE GENOMIC DNA]</scope>
    <source>
        <strain>ATCC 9150 / SARB42</strain>
    </source>
</reference>
<gene>
    <name evidence="1" type="primary">nfuA</name>
    <name type="synonym">yhgI</name>
    <name type="ordered locus">SPA3376</name>
</gene>
<dbReference type="EMBL" id="CP000026">
    <property type="protein sequence ID" value="AAV79189.1"/>
    <property type="molecule type" value="Genomic_DNA"/>
</dbReference>
<dbReference type="RefSeq" id="WP_000619384.1">
    <property type="nucleotide sequence ID" value="NC_006511.1"/>
</dbReference>
<dbReference type="SMR" id="Q5PLY6"/>
<dbReference type="KEGG" id="spt:SPA3376"/>
<dbReference type="HOGENOM" id="CLU_094569_0_0_6"/>
<dbReference type="Proteomes" id="UP000008185">
    <property type="component" value="Chromosome"/>
</dbReference>
<dbReference type="GO" id="GO:0051539">
    <property type="term" value="F:4 iron, 4 sulfur cluster binding"/>
    <property type="evidence" value="ECO:0007669"/>
    <property type="project" value="UniProtKB-UniRule"/>
</dbReference>
<dbReference type="GO" id="GO:0005506">
    <property type="term" value="F:iron ion binding"/>
    <property type="evidence" value="ECO:0007669"/>
    <property type="project" value="InterPro"/>
</dbReference>
<dbReference type="GO" id="GO:0016226">
    <property type="term" value="P:iron-sulfur cluster assembly"/>
    <property type="evidence" value="ECO:0007669"/>
    <property type="project" value="UniProtKB-UniRule"/>
</dbReference>
<dbReference type="GO" id="GO:0051604">
    <property type="term" value="P:protein maturation"/>
    <property type="evidence" value="ECO:0007669"/>
    <property type="project" value="UniProtKB-UniRule"/>
</dbReference>
<dbReference type="FunFam" id="2.60.300.12:FF:000004">
    <property type="entry name" value="Fe/S biogenesis protein NfuA"/>
    <property type="match status" value="1"/>
</dbReference>
<dbReference type="FunFam" id="3.30.300.130:FF:000002">
    <property type="entry name" value="Fe/S biogenesis protein NfuA"/>
    <property type="match status" value="1"/>
</dbReference>
<dbReference type="Gene3D" id="3.30.300.130">
    <property type="entry name" value="Fe-S cluster assembly (FSCA)"/>
    <property type="match status" value="1"/>
</dbReference>
<dbReference type="Gene3D" id="2.60.300.12">
    <property type="entry name" value="HesB-like domain"/>
    <property type="match status" value="1"/>
</dbReference>
<dbReference type="HAMAP" id="MF_01637">
    <property type="entry name" value="Fe_S_biogen_NfuA"/>
    <property type="match status" value="1"/>
</dbReference>
<dbReference type="InterPro" id="IPR017726">
    <property type="entry name" value="Fe/S_biogenesis_protein_NfuA"/>
</dbReference>
<dbReference type="InterPro" id="IPR000361">
    <property type="entry name" value="FeS_biogenesis"/>
</dbReference>
<dbReference type="InterPro" id="IPR034904">
    <property type="entry name" value="FSCA_dom_sf"/>
</dbReference>
<dbReference type="InterPro" id="IPR035903">
    <property type="entry name" value="HesB-like_dom_sf"/>
</dbReference>
<dbReference type="InterPro" id="IPR001075">
    <property type="entry name" value="NIF_FeS_clus_asmbl_NifU_C"/>
</dbReference>
<dbReference type="NCBIfam" id="NF008392">
    <property type="entry name" value="PRK11190.1"/>
    <property type="match status" value="1"/>
</dbReference>
<dbReference type="NCBIfam" id="TIGR03341">
    <property type="entry name" value="YhgI_GntY"/>
    <property type="match status" value="1"/>
</dbReference>
<dbReference type="PANTHER" id="PTHR11178:SF51">
    <property type="entry name" value="FE_S BIOGENESIS PROTEIN NFUA"/>
    <property type="match status" value="1"/>
</dbReference>
<dbReference type="PANTHER" id="PTHR11178">
    <property type="entry name" value="IRON-SULFUR CLUSTER SCAFFOLD PROTEIN NFU-RELATED"/>
    <property type="match status" value="1"/>
</dbReference>
<dbReference type="Pfam" id="PF01521">
    <property type="entry name" value="Fe-S_biosyn"/>
    <property type="match status" value="1"/>
</dbReference>
<dbReference type="Pfam" id="PF01106">
    <property type="entry name" value="NifU"/>
    <property type="match status" value="1"/>
</dbReference>
<dbReference type="SUPFAM" id="SSF117916">
    <property type="entry name" value="Fe-S cluster assembly (FSCA) domain-like"/>
    <property type="match status" value="1"/>
</dbReference>
<dbReference type="SUPFAM" id="SSF89360">
    <property type="entry name" value="HesB-like domain"/>
    <property type="match status" value="1"/>
</dbReference>
<organism>
    <name type="scientific">Salmonella paratyphi A (strain ATCC 9150 / SARB42)</name>
    <dbReference type="NCBI Taxonomy" id="295319"/>
    <lineage>
        <taxon>Bacteria</taxon>
        <taxon>Pseudomonadati</taxon>
        <taxon>Pseudomonadota</taxon>
        <taxon>Gammaproteobacteria</taxon>
        <taxon>Enterobacterales</taxon>
        <taxon>Enterobacteriaceae</taxon>
        <taxon>Salmonella</taxon>
    </lineage>
</organism>
<name>NFUA_SALPA</name>
<evidence type="ECO:0000255" key="1">
    <source>
        <dbReference type="HAMAP-Rule" id="MF_01637"/>
    </source>
</evidence>
<protein>
    <recommendedName>
        <fullName evidence="1">Fe/S biogenesis protein NfuA</fullName>
    </recommendedName>
</protein>
<keyword id="KW-0004">4Fe-4S</keyword>
<keyword id="KW-0408">Iron</keyword>
<keyword id="KW-0411">Iron-sulfur</keyword>
<keyword id="KW-0479">Metal-binding</keyword>
<proteinExistence type="inferred from homology"/>
<comment type="function">
    <text evidence="1">Involved in iron-sulfur cluster biogenesis. Binds a 4Fe-4S cluster, can transfer this cluster to apoproteins, and thereby intervenes in the maturation of Fe/S proteins. Could also act as a scaffold/chaperone for damaged Fe/S proteins.</text>
</comment>
<comment type="cofactor">
    <cofactor evidence="1">
        <name>[4Fe-4S] cluster</name>
        <dbReference type="ChEBI" id="CHEBI:49883"/>
    </cofactor>
    <text evidence="1">Binds 1 [4Fe-4S] cluster per subunit. The cluster is presumably bound at the interface of two monomers.</text>
</comment>
<comment type="subunit">
    <text evidence="1">Homodimer.</text>
</comment>
<comment type="similarity">
    <text evidence="1">Belongs to the NfuA family.</text>
</comment>
<feature type="chain" id="PRO_0000268238" description="Fe/S biogenesis protein NfuA">
    <location>
        <begin position="1"/>
        <end position="191"/>
    </location>
</feature>
<feature type="binding site" evidence="1">
    <location>
        <position position="149"/>
    </location>
    <ligand>
        <name>[4Fe-4S] cluster</name>
        <dbReference type="ChEBI" id="CHEBI:49883"/>
    </ligand>
</feature>
<feature type="binding site" evidence="1">
    <location>
        <position position="152"/>
    </location>
    <ligand>
        <name>[4Fe-4S] cluster</name>
        <dbReference type="ChEBI" id="CHEBI:49883"/>
    </ligand>
</feature>